<sequence length="263" mass="28758">MTSPLPFVAVVPARLASTRLPNKPLADLGGKPMVVRVAERAREAGAQQVLVASDAQRVLDAVREHGFDAVLTRADHPSGTDRLAEVAAKLGFDDDTIVVNVQGDEPLIDPQLVRDVASHLAAHPSCAIATAAHPIHEAHEVFNPNYVKVVLDAHGVALYFSRAPIPWSRDAYLPHWPNVAAMPAPTCPVYRHIGLYAYRARFLRTYPTLAQAPIEAAEQLEQLRAMWHGERIAVRVTEHAPEAGIDTPADLERVQALFRSRAK</sequence>
<dbReference type="EC" id="2.7.7.38" evidence="1"/>
<dbReference type="EMBL" id="CP000546">
    <property type="protein sequence ID" value="ABN03668.1"/>
    <property type="molecule type" value="Genomic_DNA"/>
</dbReference>
<dbReference type="RefSeq" id="WP_004185994.1">
    <property type="nucleotide sequence ID" value="NC_008836.1"/>
</dbReference>
<dbReference type="SMR" id="A2S515"/>
<dbReference type="GeneID" id="92979969"/>
<dbReference type="KEGG" id="bml:BMA10229_A1048"/>
<dbReference type="HOGENOM" id="CLU_065038_1_0_4"/>
<dbReference type="UniPathway" id="UPA00030"/>
<dbReference type="UniPathway" id="UPA00358">
    <property type="reaction ID" value="UER00476"/>
</dbReference>
<dbReference type="Proteomes" id="UP000002283">
    <property type="component" value="Chromosome I"/>
</dbReference>
<dbReference type="GO" id="GO:0005829">
    <property type="term" value="C:cytosol"/>
    <property type="evidence" value="ECO:0007669"/>
    <property type="project" value="TreeGrafter"/>
</dbReference>
<dbReference type="GO" id="GO:0008690">
    <property type="term" value="F:3-deoxy-manno-octulosonate cytidylyltransferase activity"/>
    <property type="evidence" value="ECO:0007669"/>
    <property type="project" value="UniProtKB-UniRule"/>
</dbReference>
<dbReference type="GO" id="GO:0033468">
    <property type="term" value="P:CMP-keto-3-deoxy-D-manno-octulosonic acid biosynthetic process"/>
    <property type="evidence" value="ECO:0007669"/>
    <property type="project" value="UniProtKB-UniRule"/>
</dbReference>
<dbReference type="GO" id="GO:0009103">
    <property type="term" value="P:lipopolysaccharide biosynthetic process"/>
    <property type="evidence" value="ECO:0007669"/>
    <property type="project" value="UniProtKB-UniRule"/>
</dbReference>
<dbReference type="CDD" id="cd02517">
    <property type="entry name" value="CMP-KDO-Synthetase"/>
    <property type="match status" value="1"/>
</dbReference>
<dbReference type="FunFam" id="3.90.550.10:FF:000011">
    <property type="entry name" value="3-deoxy-manno-octulosonate cytidylyltransferase"/>
    <property type="match status" value="1"/>
</dbReference>
<dbReference type="Gene3D" id="3.90.550.10">
    <property type="entry name" value="Spore Coat Polysaccharide Biosynthesis Protein SpsA, Chain A"/>
    <property type="match status" value="1"/>
</dbReference>
<dbReference type="HAMAP" id="MF_00057">
    <property type="entry name" value="KdsB"/>
    <property type="match status" value="1"/>
</dbReference>
<dbReference type="InterPro" id="IPR003329">
    <property type="entry name" value="Cytidylyl_trans"/>
</dbReference>
<dbReference type="InterPro" id="IPR004528">
    <property type="entry name" value="KdsB"/>
</dbReference>
<dbReference type="InterPro" id="IPR029044">
    <property type="entry name" value="Nucleotide-diphossugar_trans"/>
</dbReference>
<dbReference type="NCBIfam" id="TIGR00466">
    <property type="entry name" value="kdsB"/>
    <property type="match status" value="1"/>
</dbReference>
<dbReference type="NCBIfam" id="NF003950">
    <property type="entry name" value="PRK05450.1-3"/>
    <property type="match status" value="1"/>
</dbReference>
<dbReference type="NCBIfam" id="NF003952">
    <property type="entry name" value="PRK05450.1-5"/>
    <property type="match status" value="1"/>
</dbReference>
<dbReference type="NCBIfam" id="NF009905">
    <property type="entry name" value="PRK13368.1"/>
    <property type="match status" value="1"/>
</dbReference>
<dbReference type="PANTHER" id="PTHR42866">
    <property type="entry name" value="3-DEOXY-MANNO-OCTULOSONATE CYTIDYLYLTRANSFERASE"/>
    <property type="match status" value="1"/>
</dbReference>
<dbReference type="PANTHER" id="PTHR42866:SF2">
    <property type="entry name" value="3-DEOXY-MANNO-OCTULOSONATE CYTIDYLYLTRANSFERASE, MITOCHONDRIAL"/>
    <property type="match status" value="1"/>
</dbReference>
<dbReference type="Pfam" id="PF02348">
    <property type="entry name" value="CTP_transf_3"/>
    <property type="match status" value="1"/>
</dbReference>
<dbReference type="SUPFAM" id="SSF53448">
    <property type="entry name" value="Nucleotide-diphospho-sugar transferases"/>
    <property type="match status" value="1"/>
</dbReference>
<comment type="function">
    <text evidence="1">Activates KDO (a required 8-carbon sugar) for incorporation into bacterial lipopolysaccharide in Gram-negative bacteria.</text>
</comment>
<comment type="catalytic activity">
    <reaction evidence="1">
        <text>3-deoxy-alpha-D-manno-oct-2-ulosonate + CTP = CMP-3-deoxy-beta-D-manno-octulosonate + diphosphate</text>
        <dbReference type="Rhea" id="RHEA:23448"/>
        <dbReference type="ChEBI" id="CHEBI:33019"/>
        <dbReference type="ChEBI" id="CHEBI:37563"/>
        <dbReference type="ChEBI" id="CHEBI:85986"/>
        <dbReference type="ChEBI" id="CHEBI:85987"/>
        <dbReference type="EC" id="2.7.7.38"/>
    </reaction>
</comment>
<comment type="pathway">
    <text evidence="1">Nucleotide-sugar biosynthesis; CMP-3-deoxy-D-manno-octulosonate biosynthesis; CMP-3-deoxy-D-manno-octulosonate from 3-deoxy-D-manno-octulosonate and CTP: step 1/1.</text>
</comment>
<comment type="pathway">
    <text evidence="1">Bacterial outer membrane biogenesis; lipopolysaccharide biosynthesis.</text>
</comment>
<comment type="subcellular location">
    <subcellularLocation>
        <location evidence="1">Cytoplasm</location>
    </subcellularLocation>
</comment>
<comment type="similarity">
    <text evidence="1">Belongs to the KdsB family.</text>
</comment>
<organism>
    <name type="scientific">Burkholderia mallei (strain NCTC 10229)</name>
    <dbReference type="NCBI Taxonomy" id="412022"/>
    <lineage>
        <taxon>Bacteria</taxon>
        <taxon>Pseudomonadati</taxon>
        <taxon>Pseudomonadota</taxon>
        <taxon>Betaproteobacteria</taxon>
        <taxon>Burkholderiales</taxon>
        <taxon>Burkholderiaceae</taxon>
        <taxon>Burkholderia</taxon>
        <taxon>pseudomallei group</taxon>
    </lineage>
</organism>
<accession>A2S515</accession>
<keyword id="KW-0963">Cytoplasm</keyword>
<keyword id="KW-0448">Lipopolysaccharide biosynthesis</keyword>
<keyword id="KW-0548">Nucleotidyltransferase</keyword>
<keyword id="KW-0808">Transferase</keyword>
<gene>
    <name evidence="1" type="primary">kdsB</name>
    <name type="ordered locus">BMA10229_A1048</name>
</gene>
<evidence type="ECO:0000255" key="1">
    <source>
        <dbReference type="HAMAP-Rule" id="MF_00057"/>
    </source>
</evidence>
<name>KDSB_BURM9</name>
<proteinExistence type="inferred from homology"/>
<feature type="chain" id="PRO_0000370028" description="3-deoxy-manno-octulosonate cytidylyltransferase">
    <location>
        <begin position="1"/>
        <end position="263"/>
    </location>
</feature>
<reference key="1">
    <citation type="journal article" date="2010" name="Genome Biol. Evol.">
        <title>Continuing evolution of Burkholderia mallei through genome reduction and large-scale rearrangements.</title>
        <authorList>
            <person name="Losada L."/>
            <person name="Ronning C.M."/>
            <person name="DeShazer D."/>
            <person name="Woods D."/>
            <person name="Fedorova N."/>
            <person name="Kim H.S."/>
            <person name="Shabalina S.A."/>
            <person name="Pearson T.R."/>
            <person name="Brinkac L."/>
            <person name="Tan P."/>
            <person name="Nandi T."/>
            <person name="Crabtree J."/>
            <person name="Badger J."/>
            <person name="Beckstrom-Sternberg S."/>
            <person name="Saqib M."/>
            <person name="Schutzer S.E."/>
            <person name="Keim P."/>
            <person name="Nierman W.C."/>
        </authorList>
    </citation>
    <scope>NUCLEOTIDE SEQUENCE [LARGE SCALE GENOMIC DNA]</scope>
    <source>
        <strain>NCTC 10229</strain>
    </source>
</reference>
<protein>
    <recommendedName>
        <fullName evidence="1">3-deoxy-manno-octulosonate cytidylyltransferase</fullName>
        <ecNumber evidence="1">2.7.7.38</ecNumber>
    </recommendedName>
    <alternativeName>
        <fullName evidence="1">CMP-2-keto-3-deoxyoctulosonic acid synthase</fullName>
        <shortName evidence="1">CKS</shortName>
        <shortName evidence="1">CMP-KDO synthase</shortName>
    </alternativeName>
</protein>